<gene>
    <name evidence="1" type="primary">nusB</name>
    <name type="ordered locus">LCABL_18560</name>
</gene>
<accession>B3WEY5</accession>
<protein>
    <recommendedName>
        <fullName evidence="1">Transcription antitermination protein NusB</fullName>
    </recommendedName>
    <alternativeName>
        <fullName evidence="1">Antitermination factor NusB</fullName>
    </alternativeName>
</protein>
<name>NUSB_LACCB</name>
<evidence type="ECO:0000255" key="1">
    <source>
        <dbReference type="HAMAP-Rule" id="MF_00073"/>
    </source>
</evidence>
<feature type="chain" id="PRO_1000092561" description="Transcription antitermination protein NusB">
    <location>
        <begin position="1"/>
        <end position="135"/>
    </location>
</feature>
<reference key="1">
    <citation type="submission" date="2008-06" db="EMBL/GenBank/DDBJ databases">
        <title>Lactobacillus casei BL23 complete genome sequence.</title>
        <authorList>
            <person name="Maze A."/>
            <person name="Boel G."/>
            <person name="Bourand A."/>
            <person name="Loux V."/>
            <person name="Gibrat J.F."/>
            <person name="Zuniga M."/>
            <person name="Hartke A."/>
            <person name="Deutscher J."/>
        </authorList>
    </citation>
    <scope>NUCLEOTIDE SEQUENCE [LARGE SCALE GENOMIC DNA]</scope>
    <source>
        <strain>BL23</strain>
    </source>
</reference>
<comment type="function">
    <text evidence="1">Involved in transcription antitermination. Required for transcription of ribosomal RNA (rRNA) genes. Binds specifically to the boxA antiterminator sequence of the ribosomal RNA (rrn) operons.</text>
</comment>
<comment type="similarity">
    <text evidence="1">Belongs to the NusB family.</text>
</comment>
<organism>
    <name type="scientific">Lacticaseibacillus casei (strain BL23)</name>
    <name type="common">Lactobacillus casei</name>
    <dbReference type="NCBI Taxonomy" id="543734"/>
    <lineage>
        <taxon>Bacteria</taxon>
        <taxon>Bacillati</taxon>
        <taxon>Bacillota</taxon>
        <taxon>Bacilli</taxon>
        <taxon>Lactobacillales</taxon>
        <taxon>Lactobacillaceae</taxon>
        <taxon>Lacticaseibacillus</taxon>
    </lineage>
</organism>
<keyword id="KW-0694">RNA-binding</keyword>
<keyword id="KW-0804">Transcription</keyword>
<keyword id="KW-0889">Transcription antitermination</keyword>
<keyword id="KW-0805">Transcription regulation</keyword>
<proteinExistence type="inferred from homology"/>
<dbReference type="EMBL" id="FM177140">
    <property type="protein sequence ID" value="CAQ66936.1"/>
    <property type="molecule type" value="Genomic_DNA"/>
</dbReference>
<dbReference type="SMR" id="B3WEY5"/>
<dbReference type="KEGG" id="lcb:LCABL_18560"/>
<dbReference type="HOGENOM" id="CLU_087843_3_2_9"/>
<dbReference type="GO" id="GO:0005829">
    <property type="term" value="C:cytosol"/>
    <property type="evidence" value="ECO:0007669"/>
    <property type="project" value="TreeGrafter"/>
</dbReference>
<dbReference type="GO" id="GO:0003723">
    <property type="term" value="F:RNA binding"/>
    <property type="evidence" value="ECO:0007669"/>
    <property type="project" value="UniProtKB-UniRule"/>
</dbReference>
<dbReference type="GO" id="GO:0006353">
    <property type="term" value="P:DNA-templated transcription termination"/>
    <property type="evidence" value="ECO:0007669"/>
    <property type="project" value="UniProtKB-UniRule"/>
</dbReference>
<dbReference type="GO" id="GO:0031564">
    <property type="term" value="P:transcription antitermination"/>
    <property type="evidence" value="ECO:0007669"/>
    <property type="project" value="UniProtKB-KW"/>
</dbReference>
<dbReference type="Gene3D" id="1.10.940.10">
    <property type="entry name" value="NusB-like"/>
    <property type="match status" value="1"/>
</dbReference>
<dbReference type="HAMAP" id="MF_00073">
    <property type="entry name" value="NusB"/>
    <property type="match status" value="1"/>
</dbReference>
<dbReference type="InterPro" id="IPR035926">
    <property type="entry name" value="NusB-like_sf"/>
</dbReference>
<dbReference type="InterPro" id="IPR011605">
    <property type="entry name" value="NusB_fam"/>
</dbReference>
<dbReference type="InterPro" id="IPR006027">
    <property type="entry name" value="NusB_RsmB_TIM44"/>
</dbReference>
<dbReference type="NCBIfam" id="TIGR01951">
    <property type="entry name" value="nusB"/>
    <property type="match status" value="1"/>
</dbReference>
<dbReference type="NCBIfam" id="NF001223">
    <property type="entry name" value="PRK00202.1-1"/>
    <property type="match status" value="1"/>
</dbReference>
<dbReference type="PANTHER" id="PTHR11078:SF3">
    <property type="entry name" value="ANTITERMINATION NUSB DOMAIN-CONTAINING PROTEIN"/>
    <property type="match status" value="1"/>
</dbReference>
<dbReference type="PANTHER" id="PTHR11078">
    <property type="entry name" value="N UTILIZATION SUBSTANCE PROTEIN B-RELATED"/>
    <property type="match status" value="1"/>
</dbReference>
<dbReference type="Pfam" id="PF01029">
    <property type="entry name" value="NusB"/>
    <property type="match status" value="1"/>
</dbReference>
<dbReference type="SUPFAM" id="SSF48013">
    <property type="entry name" value="NusB-like"/>
    <property type="match status" value="1"/>
</dbReference>
<sequence length="135" mass="14848">MESRHAIREAAFQALFALATNPEADKDAVYAEVLPQDTEVPAYLTTLVEGVLSKQADLDAALTPQLKKGWSLSRLTKPDLIILRLGLYEIRYEEAMPEAAAINEAINLAKRYSDDQSAKFVNGILANFIQATPQA</sequence>